<gene>
    <name evidence="1" type="primary">cmk</name>
    <name type="ordered locus">BAMEG_3075</name>
</gene>
<protein>
    <recommendedName>
        <fullName evidence="1">Cytidylate kinase</fullName>
        <shortName evidence="1">CK</shortName>
        <ecNumber evidence="1">2.7.4.25</ecNumber>
    </recommendedName>
    <alternativeName>
        <fullName evidence="1">Cytidine monophosphate kinase</fullName>
        <shortName evidence="1">CMP kinase</shortName>
    </alternativeName>
</protein>
<keyword id="KW-0067">ATP-binding</keyword>
<keyword id="KW-0963">Cytoplasm</keyword>
<keyword id="KW-0418">Kinase</keyword>
<keyword id="KW-0547">Nucleotide-binding</keyword>
<keyword id="KW-0808">Transferase</keyword>
<organism>
    <name type="scientific">Bacillus anthracis (strain CDC 684 / NRRL 3495)</name>
    <dbReference type="NCBI Taxonomy" id="568206"/>
    <lineage>
        <taxon>Bacteria</taxon>
        <taxon>Bacillati</taxon>
        <taxon>Bacillota</taxon>
        <taxon>Bacilli</taxon>
        <taxon>Bacillales</taxon>
        <taxon>Bacillaceae</taxon>
        <taxon>Bacillus</taxon>
        <taxon>Bacillus cereus group</taxon>
    </lineage>
</organism>
<accession>C3L9G1</accession>
<reference key="1">
    <citation type="submission" date="2008-10" db="EMBL/GenBank/DDBJ databases">
        <title>Genome sequence of Bacillus anthracis str. CDC 684.</title>
        <authorList>
            <person name="Dodson R.J."/>
            <person name="Munk A.C."/>
            <person name="Brettin T."/>
            <person name="Bruce D."/>
            <person name="Detter C."/>
            <person name="Tapia R."/>
            <person name="Han C."/>
            <person name="Sutton G."/>
            <person name="Sims D."/>
        </authorList>
    </citation>
    <scope>NUCLEOTIDE SEQUENCE [LARGE SCALE GENOMIC DNA]</scope>
    <source>
        <strain>CDC 684 / NRRL 3495</strain>
    </source>
</reference>
<comment type="catalytic activity">
    <reaction evidence="1">
        <text>CMP + ATP = CDP + ADP</text>
        <dbReference type="Rhea" id="RHEA:11600"/>
        <dbReference type="ChEBI" id="CHEBI:30616"/>
        <dbReference type="ChEBI" id="CHEBI:58069"/>
        <dbReference type="ChEBI" id="CHEBI:60377"/>
        <dbReference type="ChEBI" id="CHEBI:456216"/>
        <dbReference type="EC" id="2.7.4.25"/>
    </reaction>
</comment>
<comment type="catalytic activity">
    <reaction evidence="1">
        <text>dCMP + ATP = dCDP + ADP</text>
        <dbReference type="Rhea" id="RHEA:25094"/>
        <dbReference type="ChEBI" id="CHEBI:30616"/>
        <dbReference type="ChEBI" id="CHEBI:57566"/>
        <dbReference type="ChEBI" id="CHEBI:58593"/>
        <dbReference type="ChEBI" id="CHEBI:456216"/>
        <dbReference type="EC" id="2.7.4.25"/>
    </reaction>
</comment>
<comment type="subcellular location">
    <subcellularLocation>
        <location evidence="1">Cytoplasm</location>
    </subcellularLocation>
</comment>
<comment type="similarity">
    <text evidence="1">Belongs to the cytidylate kinase family. Type 1 subfamily.</text>
</comment>
<sequence length="225" mass="25285">MDKRISIAIDGPAAAGKSTVAKVVAKKLSYVYIDTGAMYRTITYAALEQKVDIENEEQLMEVVKNVKIEFQQGENTQLVFLNGQDVSEVIRTPEVTNRVSIVAKHRLVREEMVRRQQELAEKGGVVMDGRDIGTHVLPDAEVKIFMLASVEERAERRHLENMNKGFDSNLEQLKEEIAQRDKLDSEREVSPLKKADDALELDTTSLSIEEVVQKIMGIVLGVFAK</sequence>
<name>KCY_BACAC</name>
<feature type="chain" id="PRO_1000125271" description="Cytidylate kinase">
    <location>
        <begin position="1"/>
        <end position="225"/>
    </location>
</feature>
<feature type="binding site" evidence="1">
    <location>
        <begin position="11"/>
        <end position="19"/>
    </location>
    <ligand>
        <name>ATP</name>
        <dbReference type="ChEBI" id="CHEBI:30616"/>
    </ligand>
</feature>
<proteinExistence type="inferred from homology"/>
<evidence type="ECO:0000255" key="1">
    <source>
        <dbReference type="HAMAP-Rule" id="MF_00238"/>
    </source>
</evidence>
<dbReference type="EC" id="2.7.4.25" evidence="1"/>
<dbReference type="EMBL" id="CP001215">
    <property type="protein sequence ID" value="ACP17499.1"/>
    <property type="molecule type" value="Genomic_DNA"/>
</dbReference>
<dbReference type="RefSeq" id="WP_000361263.1">
    <property type="nucleotide sequence ID" value="NC_012581.1"/>
</dbReference>
<dbReference type="SMR" id="C3L9G1"/>
<dbReference type="GeneID" id="45021493"/>
<dbReference type="KEGG" id="bah:BAMEG_3075"/>
<dbReference type="HOGENOM" id="CLU_079959_0_2_9"/>
<dbReference type="GO" id="GO:0005829">
    <property type="term" value="C:cytosol"/>
    <property type="evidence" value="ECO:0007669"/>
    <property type="project" value="TreeGrafter"/>
</dbReference>
<dbReference type="GO" id="GO:0005524">
    <property type="term" value="F:ATP binding"/>
    <property type="evidence" value="ECO:0007669"/>
    <property type="project" value="UniProtKB-UniRule"/>
</dbReference>
<dbReference type="GO" id="GO:0036430">
    <property type="term" value="F:CMP kinase activity"/>
    <property type="evidence" value="ECO:0007669"/>
    <property type="project" value="RHEA"/>
</dbReference>
<dbReference type="GO" id="GO:0036431">
    <property type="term" value="F:dCMP kinase activity"/>
    <property type="evidence" value="ECO:0007669"/>
    <property type="project" value="RHEA"/>
</dbReference>
<dbReference type="GO" id="GO:0015949">
    <property type="term" value="P:nucleobase-containing small molecule interconversion"/>
    <property type="evidence" value="ECO:0007669"/>
    <property type="project" value="TreeGrafter"/>
</dbReference>
<dbReference type="GO" id="GO:0006220">
    <property type="term" value="P:pyrimidine nucleotide metabolic process"/>
    <property type="evidence" value="ECO:0007669"/>
    <property type="project" value="UniProtKB-UniRule"/>
</dbReference>
<dbReference type="CDD" id="cd02020">
    <property type="entry name" value="CMPK"/>
    <property type="match status" value="1"/>
</dbReference>
<dbReference type="FunFam" id="3.40.50.300:FF:000484">
    <property type="entry name" value="Cytidylate kinase"/>
    <property type="match status" value="1"/>
</dbReference>
<dbReference type="Gene3D" id="3.40.50.300">
    <property type="entry name" value="P-loop containing nucleotide triphosphate hydrolases"/>
    <property type="match status" value="1"/>
</dbReference>
<dbReference type="HAMAP" id="MF_00238">
    <property type="entry name" value="Cytidyl_kinase_type1"/>
    <property type="match status" value="1"/>
</dbReference>
<dbReference type="InterPro" id="IPR003136">
    <property type="entry name" value="Cytidylate_kin"/>
</dbReference>
<dbReference type="InterPro" id="IPR011994">
    <property type="entry name" value="Cytidylate_kinase_dom"/>
</dbReference>
<dbReference type="InterPro" id="IPR027417">
    <property type="entry name" value="P-loop_NTPase"/>
</dbReference>
<dbReference type="NCBIfam" id="TIGR00017">
    <property type="entry name" value="cmk"/>
    <property type="match status" value="1"/>
</dbReference>
<dbReference type="PANTHER" id="PTHR21299:SF2">
    <property type="entry name" value="CYTIDYLATE KINASE"/>
    <property type="match status" value="1"/>
</dbReference>
<dbReference type="PANTHER" id="PTHR21299">
    <property type="entry name" value="CYTIDYLATE KINASE/PANTOATE-BETA-ALANINE LIGASE"/>
    <property type="match status" value="1"/>
</dbReference>
<dbReference type="Pfam" id="PF02224">
    <property type="entry name" value="Cytidylate_kin"/>
    <property type="match status" value="1"/>
</dbReference>
<dbReference type="SUPFAM" id="SSF52540">
    <property type="entry name" value="P-loop containing nucleoside triphosphate hydrolases"/>
    <property type="match status" value="1"/>
</dbReference>